<keyword id="KW-0119">Carbohydrate metabolism</keyword>
<keyword id="KW-1003">Cell membrane</keyword>
<keyword id="KW-0968">Cytoplasmic vesicle</keyword>
<keyword id="KW-0903">Direct protein sequencing</keyword>
<keyword id="KW-0225">Disease variant</keyword>
<keyword id="KW-0325">Glycoprotein</keyword>
<keyword id="KW-0326">Glycosidase</keyword>
<keyword id="KW-0378">Hydrolase</keyword>
<keyword id="KW-0442">Lipid degradation</keyword>
<keyword id="KW-0443">Lipid metabolism</keyword>
<keyword id="KW-0458">Lysosome</keyword>
<keyword id="KW-0472">Membrane</keyword>
<keyword id="KW-0597">Phosphoprotein</keyword>
<keyword id="KW-1267">Proteomics identification</keyword>
<keyword id="KW-1185">Reference proteome</keyword>
<keyword id="KW-0677">Repeat</keyword>
<keyword id="KW-0732">Signal</keyword>
<gene>
    <name type="primary">NEU1</name>
    <name type="synonym">NANH</name>
</gene>
<reference key="1">
    <citation type="journal article" date="1996" name="Genes Dev.">
        <title>Characterization of human lysosomal neuraminidase defines the molecular basis of the metabolic storage disorder sialidosis.</title>
        <authorList>
            <person name="Bonten E.J."/>
            <person name="van der Spoel A."/>
            <person name="Fornerod M."/>
            <person name="Grosveld G."/>
            <person name="d'Azzo A."/>
        </authorList>
    </citation>
    <scope>NUCLEOTIDE SEQUENCE [MRNA]</scope>
    <scope>CATALYTIC ACTIVITY</scope>
    <scope>FUNCTION</scope>
    <scope>SUBCELLULAR LOCATION</scope>
    <scope>TISSUE SPECIFICITY</scope>
    <scope>GLYCOSYLATION</scope>
    <scope>VARIANT TYPE II SIALIDOSIS ARG-91</scope>
    <source>
        <tissue>Fibroblast</tissue>
    </source>
</reference>
<reference key="2">
    <citation type="journal article" date="1997" name="J. Biol. Chem.">
        <title>Identification of a sialidase encoded in the human major histocompatibility complex.</title>
        <authorList>
            <person name="Milner C.M."/>
            <person name="Smith S.V."/>
            <person name="Carrillo M.B."/>
            <person name="Taylor G.L."/>
            <person name="Hollinshead M."/>
            <person name="Campbell R.D."/>
        </authorList>
    </citation>
    <scope>NUCLEOTIDE SEQUENCE [MRNA]</scope>
    <source>
        <tissue>Monocyte</tissue>
    </source>
</reference>
<reference key="3">
    <citation type="journal article" date="1997" name="Nat. Genet.">
        <title>Cloning, expression and chromosomal mapping of human lysosomal sialidase and characterization of mutations in sialidosis.</title>
        <authorList>
            <person name="Pshezhetsky A.V."/>
            <person name="Richard C."/>
            <person name="Michaud L."/>
            <person name="Igdoura S.A."/>
            <person name="Wang S."/>
            <person name="Elsliger M.-A."/>
            <person name="Ou J."/>
            <person name="Leclerc D."/>
            <person name="Gravel R.A."/>
            <person name="Dallaire L."/>
            <person name="Potier M."/>
        </authorList>
    </citation>
    <scope>NUCLEOTIDE SEQUENCE [MRNA]</scope>
    <scope>CATALYTIC ACTIVITY</scope>
    <scope>TISSUE SPECIFICITY</scope>
    <scope>VARIANTS SIALIDOSIS TYR-260 AND PRO-363</scope>
    <source>
        <tissue>Fibroblast</tissue>
    </source>
</reference>
<reference key="4">
    <citation type="journal article" date="2003" name="Genome Res.">
        <title>Analysis of the gene-dense major histocompatibility complex class III region and its comparison to mouse.</title>
        <authorList>
            <person name="Xie T."/>
            <person name="Rowen L."/>
            <person name="Aguado B."/>
            <person name="Ahearn M.E."/>
            <person name="Madan A."/>
            <person name="Qin S."/>
            <person name="Campbell R.D."/>
            <person name="Hood L."/>
        </authorList>
    </citation>
    <scope>NUCLEOTIDE SEQUENCE [LARGE SCALE GENOMIC DNA]</scope>
</reference>
<reference key="5">
    <citation type="submission" date="1999-09" db="EMBL/GenBank/DDBJ databases">
        <title>Homo sapiens 2,229,817bp genomic DNA of 6p21.3 HLA class I region.</title>
        <authorList>
            <person name="Shiina S."/>
            <person name="Tamiya G."/>
            <person name="Oka A."/>
            <person name="Inoko H."/>
        </authorList>
    </citation>
    <scope>NUCLEOTIDE SEQUENCE [LARGE SCALE GENOMIC DNA]</scope>
</reference>
<reference key="6">
    <citation type="submission" date="2003-05" db="EMBL/GenBank/DDBJ databases">
        <title>Cloning of human full-length CDSs in BD Creator(TM) system donor vector.</title>
        <authorList>
            <person name="Kalnine N."/>
            <person name="Chen X."/>
            <person name="Rolfs A."/>
            <person name="Halleck A."/>
            <person name="Hines L."/>
            <person name="Eisenstein S."/>
            <person name="Koundinya M."/>
            <person name="Raphael J."/>
            <person name="Moreira D."/>
            <person name="Kelley T."/>
            <person name="LaBaer J."/>
            <person name="Lin Y."/>
            <person name="Phelan M."/>
            <person name="Farmer A."/>
        </authorList>
    </citation>
    <scope>NUCLEOTIDE SEQUENCE [LARGE SCALE MRNA]</scope>
</reference>
<reference key="7">
    <citation type="journal article" date="2004" name="Genome Res.">
        <title>The status, quality, and expansion of the NIH full-length cDNA project: the Mammalian Gene Collection (MGC).</title>
        <authorList>
            <consortium name="The MGC Project Team"/>
        </authorList>
    </citation>
    <scope>NUCLEOTIDE SEQUENCE [LARGE SCALE MRNA]</scope>
    <source>
        <tissue>Brain</tissue>
        <tissue>Kidney</tissue>
    </source>
</reference>
<reference key="8">
    <citation type="journal article" date="1998" name="Biochem. J.">
        <title>Molecular mechanism of lysosomal sialidase deficiency in galactosialidosis involves its rapid degradation.</title>
        <authorList>
            <person name="Vinogradova M.V."/>
            <person name="Michaud L."/>
            <person name="Mezentsev A.V."/>
            <person name="Lukong K.E."/>
            <person name="El-Alfy M."/>
            <person name="Morales C.R."/>
            <person name="Potier M."/>
            <person name="Pshezhetsky A.V."/>
        </authorList>
    </citation>
    <scope>PROTEIN SEQUENCE OF 48-55</scope>
    <scope>GLYCOSYLATION</scope>
    <source>
        <tissue>Placenta</tissue>
    </source>
</reference>
<reference key="9">
    <citation type="journal article" date="2001" name="J. Biol. Chem.">
        <title>Intracellular distribution of lysosomal sialidase is controlled by the internalization signal in its cytoplasmic tail.</title>
        <authorList>
            <person name="Lukong K.E."/>
            <person name="Seyrantepe V."/>
            <person name="Landry K."/>
            <person name="Trudel S."/>
            <person name="Ahmad A."/>
            <person name="Gahl W.A."/>
            <person name="Lefrancois S."/>
            <person name="Morales C.R."/>
            <person name="Pshezhetsky A.V."/>
        </authorList>
    </citation>
    <scope>SUBCELLULAR LOCATION</scope>
    <scope>MUTAGENESIS OF TYR-412; GLY-413 AND LEU-415</scope>
</reference>
<reference key="10">
    <citation type="journal article" date="2009" name="J. Proteome Res.">
        <title>Glycoproteomics analysis of human liver tissue by combination of multiple enzyme digestion and hydrazide chemistry.</title>
        <authorList>
            <person name="Chen R."/>
            <person name="Jiang X."/>
            <person name="Sun D."/>
            <person name="Han G."/>
            <person name="Wang F."/>
            <person name="Ye M."/>
            <person name="Wang L."/>
            <person name="Zou H."/>
        </authorList>
    </citation>
    <scope>GLYCOSYLATION [LARGE SCALE ANALYSIS] AT ASN-352</scope>
    <source>
        <tissue>Liver</tissue>
    </source>
</reference>
<reference key="11">
    <citation type="journal article" date="2011" name="BMC Syst. Biol.">
        <title>Initial characterization of the human central proteome.</title>
        <authorList>
            <person name="Burkard T.R."/>
            <person name="Planyavsky M."/>
            <person name="Kaupe I."/>
            <person name="Breitwieser F.P."/>
            <person name="Buerckstuemmer T."/>
            <person name="Bennett K.L."/>
            <person name="Superti-Furga G."/>
            <person name="Colinge J."/>
        </authorList>
    </citation>
    <scope>IDENTIFICATION BY MASS SPECTROMETRY [LARGE SCALE ANALYSIS]</scope>
</reference>
<reference key="12">
    <citation type="journal article" date="2000" name="Hum. Mol. Genet.">
        <title>Characterization of the sialidase molecular defects in sialidosis patients suggests the structural organization of the lysosomal multienzyme complex.</title>
        <authorList>
            <person name="Lukong K.E."/>
            <person name="Elsliger M.-A."/>
            <person name="Chang Y."/>
            <person name="Richard C."/>
            <person name="Thomas G."/>
            <person name="Carey W."/>
            <person name="Tylki-Szymanska A."/>
            <person name="Czartoryska B."/>
            <person name="Buchholz T."/>
            <person name="Rodriguez Criado G."/>
            <person name="Palmeri S."/>
            <person name="Pshezhetsky A.V."/>
        </authorList>
    </citation>
    <scope>CHARACTERIZATION OF VARIANTS SIALIDOSIS VAL-68; GLY-182; ARG-227; TYR-260; PHE-270; VAL-298; SER-328 AND PRO-363</scope>
</reference>
<reference key="13">
    <citation type="journal article" date="2000" name="Hum. Mol. Genet.">
        <title>Novel mutations in lysosomal neuraminidase identify functional domains and determine clinical severity in sialidosis.</title>
        <authorList>
            <person name="Bonten E.J."/>
            <person name="Arts W.F."/>
            <person name="Beck M."/>
            <person name="Covanis A."/>
            <person name="Donati M.A."/>
            <person name="Parini R."/>
            <person name="Zammarchi E."/>
            <person name="d'Azzo A."/>
        </authorList>
    </citation>
    <scope>VARIANTS SIALIDOSIS MET-54; VAL-68; ARG-91; GLY-182; ALA-219; ARG-227; HIS-231; TYR-260; PRO-270; SER-294; VAL-298; SER-328; GLN-335; PRO-363; CYS-370 AND HIS-TYR-400 INS</scope>
</reference>
<reference key="14">
    <citation type="journal article" date="2000" name="J. Hum. Genet.">
        <title>Molecular and structural studies of Japanese patients with sialidosis type 1.</title>
        <authorList>
            <person name="Naganawa Y."/>
            <person name="Itoh K."/>
            <person name="Shimmoto M."/>
            <person name="Takiguchi K."/>
            <person name="Doi H."/>
            <person name="Nishizawa Y."/>
            <person name="Kobayashi T."/>
            <person name="Kamei S."/>
            <person name="Lukong K.E."/>
            <person name="Pshezhetsky A.V."/>
            <person name="Sakuraba H."/>
        </authorList>
    </citation>
    <scope>VARIANTS SIALIDOSIS MET-217 AND ARG-243</scope>
    <scope>CHARACTERIZATION OF VARIANTS SIALIDOSIS MET-217 AND ARG-243</scope>
</reference>
<reference key="15">
    <citation type="journal article" date="2001" name="J. Biol. Chem.">
        <title>Mutations in sialidosis impair sialidase binding to the lysosomal multienzyme complex.</title>
        <authorList>
            <person name="Lukong K.E."/>
            <person name="Landry K."/>
            <person name="Elsliger M.-A."/>
            <person name="Chang Y."/>
            <person name="Lefrancois S."/>
            <person name="Morales C.R."/>
            <person name="Pshezhetsky A.V."/>
        </authorList>
    </citation>
    <scope>VARIANTS SIALIDOSIS VAL-68; GLY-182; ARG-227; ARG-240; TYR-260; PHE-270; VAL-298; SER-328 AND PRO-363</scope>
    <scope>CHARACTERIZATION OF VARIANTS SIALIDOSIS VAL-68; GLY-182; ARG-227; TYR-260; PHE-270; VAL-298; SER-328 AND PRO-363</scope>
</reference>
<reference key="16">
    <citation type="journal article" date="2002" name="J. Hum. Genet.">
        <title>Novel missense mutations in the human lysosomal sialidase gene in sialidosis patients and prediction of structural alterations of mutant enzymes.</title>
        <authorList>
            <person name="Itoh K."/>
            <person name="Naganawa Y."/>
            <person name="Matsuzawa F."/>
            <person name="Aikawa S."/>
            <person name="Doi H."/>
            <person name="Sasagasako N."/>
            <person name="Yamada T."/>
            <person name="Kira J."/>
            <person name="Kobayashi T."/>
            <person name="Pshezhetsky A.V."/>
            <person name="Sakuraba H."/>
        </authorList>
    </citation>
    <scope>VARIANTS SIALIDOSIS LEU-80; ARG-240 AND SER-316</scope>
</reference>
<reference key="17">
    <citation type="journal article" date="2004" name="Hum. Mutat.">
        <title>Five novel mutations in the lysosomal sialidase gene (NEU1) in type II sialidosis patients and assessment of their impact on enzyme activity and intracellular targeting using adenovirus-mediated expression.</title>
        <authorList>
            <person name="Pattison S."/>
            <person name="Pankarican M."/>
            <person name="Rupar C.A."/>
            <person name="Graham F.L."/>
            <person name="Igdoura S.A."/>
        </authorList>
    </citation>
    <scope>VARIANTS SIALIDOSIS PRO-225; VAL-298 AND GLY-341</scope>
    <scope>CATALYTIC ACTIVITY</scope>
    <scope>SUBCELLULAR LOCATION</scope>
    <scope>CHARACTERIZATION OF VARIANTS SIALIDOSIS PRO-225; VAL-298 AND GLY-341</scope>
</reference>
<reference key="18">
    <citation type="journal article" date="2014" name="PLoS ONE">
        <title>In silico identification of new putative pathogenic variants in the NEU1 sialidase gene affecting enzyme function and subcellular localization.</title>
        <authorList>
            <person name="Bonardi D."/>
            <person name="Ravasio V."/>
            <person name="Borsani G."/>
            <person name="d'Azzo A."/>
            <person name="Bresciani R."/>
            <person name="Monti E."/>
            <person name="Giacopuzzi E."/>
        </authorList>
    </citation>
    <scope>VARIANTS SIALIDOSIS MET-217; ARG-243 AND SER-294</scope>
    <scope>VARIANTS ALA-88; PHE-90; ALA-179; GLN-208; ALA-210; ALA-217; MET-222; ASN-234; SER-248; SER-252; THR-279; ARG-351 AND GLN-357</scope>
    <scope>CHARACTERIZATION OF VARIANTS ALA-88; PHE-90; ALA-210; ALA-217; MET-222 AND ASN-234</scope>
    <scope>FUNCTION</scope>
    <scope>SUBCELLULAR LOCATION</scope>
</reference>
<reference key="19">
    <citation type="journal article" date="2021" name="Am. J. Hum. Genet.">
        <title>Progressive myoclonus epilepsies-Residual unsolved cases have marked genetic heterogeneity including dolichol-dependent protein glycosylation pathway genes.</title>
        <authorList>
            <person name="Courage C."/>
            <person name="Oliver K.L."/>
            <person name="Park E.J."/>
            <person name="Cameron J.M."/>
            <person name="Grabinska K.A."/>
            <person name="Muona M."/>
            <person name="Canafoglia L."/>
            <person name="Gambardella A."/>
            <person name="Said E."/>
            <person name="Afawi Z."/>
            <person name="Baykan B."/>
            <person name="Brandt C."/>
            <person name="di Bonaventura C."/>
            <person name="Chew H.B."/>
            <person name="Criscuolo C."/>
            <person name="Dibbens L.M."/>
            <person name="Castellotti B."/>
            <person name="Riguzzi P."/>
            <person name="Labate A."/>
            <person name="Filla A."/>
            <person name="Giallonardo A.T."/>
            <person name="Berecki G."/>
            <person name="Jackson C.B."/>
            <person name="Joensuu T."/>
            <person name="Damiano J.A."/>
            <person name="Kivity S."/>
            <person name="Korczyn A."/>
            <person name="Palotie A."/>
            <person name="Striano P."/>
            <person name="Uccellini D."/>
            <person name="Giuliano L."/>
            <person name="Andermann E."/>
            <person name="Scheffer I.E."/>
            <person name="Michelucci R."/>
            <person name="Bahlo M."/>
            <person name="Franceschetti S."/>
            <person name="Sessa W.C."/>
            <person name="Berkovic S.F."/>
            <person name="Lehesjoki A.E."/>
        </authorList>
    </citation>
    <scope>VARIANT SIALIDOSIS GLY-182</scope>
</reference>
<accession>Q99519</accession>
<organism>
    <name type="scientific">Homo sapiens</name>
    <name type="common">Human</name>
    <dbReference type="NCBI Taxonomy" id="9606"/>
    <lineage>
        <taxon>Eukaryota</taxon>
        <taxon>Metazoa</taxon>
        <taxon>Chordata</taxon>
        <taxon>Craniata</taxon>
        <taxon>Vertebrata</taxon>
        <taxon>Euteleostomi</taxon>
        <taxon>Mammalia</taxon>
        <taxon>Eutheria</taxon>
        <taxon>Euarchontoglires</taxon>
        <taxon>Primates</taxon>
        <taxon>Haplorrhini</taxon>
        <taxon>Catarrhini</taxon>
        <taxon>Hominidae</taxon>
        <taxon>Homo</taxon>
    </lineage>
</organism>
<evidence type="ECO:0000250" key="1"/>
<evidence type="ECO:0000255" key="2"/>
<evidence type="ECO:0000269" key="3">
    <source>
    </source>
</evidence>
<evidence type="ECO:0000269" key="4">
    <source>
    </source>
</evidence>
<evidence type="ECO:0000269" key="5">
    <source>
    </source>
</evidence>
<evidence type="ECO:0000269" key="6">
    <source>
    </source>
</evidence>
<evidence type="ECO:0000269" key="7">
    <source>
    </source>
</evidence>
<evidence type="ECO:0000269" key="8">
    <source>
    </source>
</evidence>
<evidence type="ECO:0000269" key="9">
    <source>
    </source>
</evidence>
<evidence type="ECO:0000269" key="10">
    <source>
    </source>
</evidence>
<evidence type="ECO:0000269" key="11">
    <source>
    </source>
</evidence>
<evidence type="ECO:0000269" key="12">
    <source>
    </source>
</evidence>
<evidence type="ECO:0000269" key="13">
    <source>
    </source>
</evidence>
<evidence type="ECO:0000269" key="14">
    <source>
    </source>
</evidence>
<evidence type="ECO:0000269" key="15">
    <source>
    </source>
</evidence>
<evidence type="ECO:0000305" key="16"/>
<name>NEUR1_HUMAN</name>
<protein>
    <recommendedName>
        <fullName>Sialidase-1</fullName>
        <ecNumber>3.2.1.18</ecNumber>
    </recommendedName>
    <alternativeName>
        <fullName>Acetylneuraminyl hydrolase</fullName>
    </alternativeName>
    <alternativeName>
        <fullName>G9 sialidase</fullName>
    </alternativeName>
    <alternativeName>
        <fullName>Lysosomal sialidase</fullName>
    </alternativeName>
    <alternativeName>
        <fullName>N-acetyl-alpha-neuraminidase 1</fullName>
    </alternativeName>
</protein>
<feature type="signal peptide" evidence="15">
    <location>
        <begin position="1"/>
        <end position="47"/>
    </location>
</feature>
<feature type="chain" id="PRO_0000012026" description="Sialidase-1">
    <location>
        <begin position="48"/>
        <end position="415"/>
    </location>
</feature>
<feature type="repeat" description="BNR 1">
    <location>
        <begin position="112"/>
        <end position="123"/>
    </location>
</feature>
<feature type="repeat" description="BNR 2">
    <location>
        <begin position="172"/>
        <end position="183"/>
    </location>
</feature>
<feature type="repeat" description="BNR 3">
    <location>
        <begin position="231"/>
        <end position="242"/>
    </location>
</feature>
<feature type="repeat" description="BNR 4">
    <location>
        <begin position="347"/>
        <end position="358"/>
    </location>
</feature>
<feature type="short sequence motif" description="FRIP motif">
    <location>
        <begin position="77"/>
        <end position="80"/>
    </location>
</feature>
<feature type="short sequence motif" description="Internalization signal">
    <location>
        <begin position="412"/>
        <end position="415"/>
    </location>
</feature>
<feature type="active site" description="Proton acceptor" evidence="1">
    <location>
        <position position="103"/>
    </location>
</feature>
<feature type="active site" description="Nucleophile" evidence="1">
    <location>
        <position position="370"/>
    </location>
</feature>
<feature type="active site" evidence="2">
    <location>
        <position position="394"/>
    </location>
</feature>
<feature type="binding site" evidence="1">
    <location>
        <position position="78"/>
    </location>
    <ligand>
        <name>substrate</name>
    </ligand>
</feature>
<feature type="binding site" evidence="1">
    <location>
        <position position="97"/>
    </location>
    <ligand>
        <name>substrate</name>
    </ligand>
</feature>
<feature type="binding site" evidence="1">
    <location>
        <position position="264"/>
    </location>
    <ligand>
        <name>substrate</name>
    </ligand>
</feature>
<feature type="binding site" evidence="1">
    <location>
        <position position="280"/>
    </location>
    <ligand>
        <name>substrate</name>
    </ligand>
</feature>
<feature type="binding site" evidence="1">
    <location>
        <position position="341"/>
    </location>
    <ligand>
        <name>substrate</name>
    </ligand>
</feature>
<feature type="glycosylation site" description="N-linked (GlcNAc...) asparagine" evidence="2">
    <location>
        <position position="186"/>
    </location>
</feature>
<feature type="glycosylation site" description="N-linked (GlcNAc...) asparagine" evidence="2">
    <location>
        <position position="343"/>
    </location>
</feature>
<feature type="glycosylation site" description="N-linked (GlcNAc...) asparagine" evidence="10">
    <location>
        <position position="352"/>
    </location>
</feature>
<feature type="sequence variant" id="VAR_012207" description="In SIALIDOSIS; type 1; mild mutation as residual activity is still measurable." evidence="5">
    <original>V</original>
    <variation>M</variation>
    <location>
        <position position="54"/>
    </location>
</feature>
<feature type="sequence variant" id="VAR_012208" description="In SIALIDOSIS; type 2; less than 10% of activity." evidence="3 5 6">
    <original>G</original>
    <variation>V</variation>
    <location>
        <position position="68"/>
    </location>
</feature>
<feature type="sequence variant" id="VAR_017460" description="In SIALIDOSIS; type 2; no enzyme activity; retained in the endoplasmic reticulum / Golgi or rapidly degraded in the lysosomes; dbSNP:rs104893985." evidence="8">
    <original>P</original>
    <variation>L</variation>
    <location>
        <position position="80"/>
    </location>
</feature>
<feature type="sequence variant" id="VAR_049203" description="Does not affect sialidase activity; dbSNP:rs34712643." evidence="11">
    <original>G</original>
    <variation>A</variation>
    <location>
        <position position="88"/>
    </location>
</feature>
<feature type="sequence variant" id="VAR_079557" description="Does not affect sialidase activity; dbSNP:rs374556080." evidence="11">
    <original>L</original>
    <variation>F</variation>
    <location>
        <position position="90"/>
    </location>
</feature>
<feature type="sequence variant" id="VAR_012209" description="In SIALIDOSIS; type 2; dbSNP:rs104893972." evidence="5 13">
    <original>L</original>
    <variation>R</variation>
    <location>
        <position position="91"/>
    </location>
</feature>
<feature type="sequence variant" id="VAR_079558" description="In dbSNP:rs150302766." evidence="11">
    <original>V</original>
    <variation>A</variation>
    <location>
        <position position="179"/>
    </location>
</feature>
<feature type="sequence variant" id="VAR_012210" description="In SIALIDOSIS; type 1; normally processed; dbSNP:rs398123392." evidence="3 5 6 12">
    <original>S</original>
    <variation>G</variation>
    <location>
        <position position="182"/>
    </location>
</feature>
<feature type="sequence variant" id="VAR_079559" description="In dbSNP:rs375104221." evidence="11">
    <original>R</original>
    <variation>Q</variation>
    <location>
        <position position="208"/>
    </location>
</feature>
<feature type="sequence variant" id="VAR_079560" description="Does not affect sialidase activity; dbSNP:rs151177689." evidence="11">
    <original>P</original>
    <variation>A</variation>
    <location>
        <position position="210"/>
    </location>
</feature>
<feature type="sequence variant" id="VAR_079561" description="Significant decrease in sialidase activity; absence of lysosomal localization; mislocalization to the endoplasmic reticulum; dbSNP:rs146850952." evidence="11">
    <original>V</original>
    <variation>A</variation>
    <location>
        <position position="217"/>
    </location>
</feature>
<feature type="sequence variant" id="VAR_012211" description="In SIALIDOSIS; type 1; partial transport and residual transport activity; dbSNP:rs28940583." evidence="4 11">
    <original>V</original>
    <variation>M</variation>
    <location>
        <position position="217"/>
    </location>
</feature>
<feature type="sequence variant" id="VAR_012212" description="In SIALIDOSIS; type 1; unable to reach the lysosomes; dbSNP:rs754068739." evidence="5">
    <original>G</original>
    <variation>A</variation>
    <location>
        <position position="219"/>
    </location>
</feature>
<feature type="sequence variant" id="VAR_079562" description="Does not affect sialidase activity; dbSNP:rs201684013." evidence="11">
    <original>T</original>
    <variation>M</variation>
    <location>
        <position position="222"/>
    </location>
</feature>
<feature type="sequence variant" id="VAR_018076" description="In SIALIDOSIS; type 2; impaired enzyme folding; dbSNP:rs104893980." evidence="9">
    <original>R</original>
    <variation>P</variation>
    <location>
        <position position="225"/>
    </location>
</feature>
<feature type="sequence variant" id="VAR_012213" description="In SIALIDOSIS; type 1 and juvenile type 2; catalytically inactive; retained in pre-lysosomal compartments; dbSNP:rs769765227." evidence="3 5 6">
    <original>G</original>
    <variation>R</variation>
    <location>
        <position position="227"/>
    </location>
</feature>
<feature type="sequence variant" id="VAR_012214" description="In SIALIDOSIS; type 1; unable to reach the lysosomes; dbSNP:rs762400331." evidence="5">
    <original>L</original>
    <variation>H</variation>
    <location>
        <position position="231"/>
    </location>
</feature>
<feature type="sequence variant" id="VAR_079563" description="Significant decrease in sialidase activity; absence of lysosomal localization; mislocalization to the endoplasmic reticulum; dbSNP:rs143868999." evidence="11">
    <original>D</original>
    <variation>N</variation>
    <location>
        <position position="234"/>
    </location>
</feature>
<feature type="sequence variant" id="VAR_012215" description="In SIALIDOSIS; type 2; no enzyme activity; retained in the endoplasmic reticulum / Golgi or rapidly degraded in the lysosomes; dbSNP:rs104893978." evidence="6 8">
    <original>W</original>
    <variation>R</variation>
    <location>
        <position position="240"/>
    </location>
</feature>
<feature type="sequence variant" id="VAR_012216" description="In SIALIDOSIS; type 1; no enzyme activity and no transport to the lysosome; dbSNP:rs104893983." evidence="4 11">
    <original>G</original>
    <variation>R</variation>
    <location>
        <position position="243"/>
    </location>
</feature>
<feature type="sequence variant" id="VAR_079564" description="In dbSNP:rs373311653." evidence="11">
    <original>G</original>
    <variation>S</variation>
    <location>
        <position position="248"/>
    </location>
</feature>
<feature type="sequence variant" id="VAR_079565" description="Does not affect sialidase activity; dbSNP:rs145177628." evidence="11">
    <original>G</original>
    <variation>S</variation>
    <location>
        <position position="252"/>
    </location>
</feature>
<feature type="sequence variant" id="VAR_012217" description="In SIALIDOSIS; infantile type 2; catalytically inactive; rapid intralysosomal degradation; dbSNP:rs104893977." evidence="3 5 6 14">
    <original>F</original>
    <variation>Y</variation>
    <location>
        <position position="260"/>
    </location>
</feature>
<feature type="sequence variant" id="VAR_012219" description="In SIALIDOSIS; type 2; reduction in enzyme activity; rapid intralysosomal degradation." evidence="3 6">
    <original>L</original>
    <variation>F</variation>
    <location>
        <position position="270"/>
    </location>
</feature>
<feature type="sequence variant" id="VAR_012218" description="In SIALIDOSIS." evidence="5">
    <original>L</original>
    <variation>P</variation>
    <location>
        <position position="270"/>
    </location>
</feature>
<feature type="sequence variant" id="VAR_079566" description="In dbSNP:rs368320390." evidence="11">
    <original>A</original>
    <variation>T</variation>
    <location>
        <position position="279"/>
    </location>
</feature>
<feature type="sequence variant" id="VAR_012220" description="In SIALIDOSIS; type 1; mild mutation as residual activity is still measurable; dbSNP:rs190549838." evidence="5 11">
    <original>R</original>
    <variation>S</variation>
    <location>
        <position position="294"/>
    </location>
</feature>
<feature type="sequence variant" id="VAR_012221" description="In SIALIDOSIS; type 2; less than 10% of activity; rapid intralysosomal degradation; impaired enzyme folding; dbSNP:rs104893981." evidence="3 5 6 9">
    <original>A</original>
    <variation>V</variation>
    <location>
        <position position="298"/>
    </location>
</feature>
<feature type="sequence variant" id="VAR_017461" description="In SIALIDOSIS; type 1; no enzyme activity; retained in the endoplasmic reticulum / Golgi or rapidly degraded in the lysosomes; dbSNP:rs104893979." evidence="8">
    <original>P</original>
    <variation>S</variation>
    <location>
        <position position="316"/>
    </location>
</feature>
<feature type="sequence variant" id="VAR_012222" description="In SIALIDOSIS; type 1; reduction in enzyme activity; dbSNP:rs534846786." evidence="3 5 6">
    <original>G</original>
    <variation>S</variation>
    <location>
        <position position="328"/>
    </location>
</feature>
<feature type="sequence variant" id="VAR_012223" description="In SIALIDOSIS; type 2; unable to reach the lysosomes; dbSNP:rs749996046." evidence="5">
    <original>P</original>
    <variation>Q</variation>
    <location>
        <position position="335"/>
    </location>
</feature>
<feature type="sequence variant" id="VAR_018077" description="In SIALIDOSIS; type 2; affects substrate binding or catalysis; dbSNP:rs751458617." evidence="9">
    <original>R</original>
    <variation>G</variation>
    <location>
        <position position="341"/>
    </location>
</feature>
<feature type="sequence variant" id="VAR_079567" description="Does not affect sialidase activity; dbSNP:rs377573360." evidence="11">
    <original>S</original>
    <variation>R</variation>
    <location>
        <position position="351"/>
    </location>
</feature>
<feature type="sequence variant" id="VAR_079568" description="In dbSNP:rs139301823." evidence="11">
    <original>R</original>
    <variation>Q</variation>
    <location>
        <position position="357"/>
    </location>
</feature>
<feature type="sequence variant" id="VAR_012224" description="In SIALIDOSIS; infantile type 2; unable to reach the lysosomes; dbSNP:rs193922915." evidence="3 5 6 14">
    <original>L</original>
    <variation>P</variation>
    <location>
        <position position="363"/>
    </location>
</feature>
<feature type="sequence variant" id="VAR_012225" description="In SIALIDOSIS; infantile type 2; catalytically inactive; dbSNP:rs1310267862." evidence="5">
    <original>Y</original>
    <variation>C</variation>
    <location>
        <position position="370"/>
    </location>
</feature>
<feature type="sequence variant" id="VAR_012226" description="In SIALIDOSIS; type 1; mild mutation as residual activity is still measurable.">
    <original>Y</original>
    <variation>YHY</variation>
    <location>
        <position position="400"/>
    </location>
</feature>
<feature type="mutagenesis site" description="Correct sorting to the plasma membrane but no endocytosis and internalization." evidence="7">
    <original>Y</original>
    <variation>A</variation>
    <location>
        <position position="412"/>
    </location>
</feature>
<feature type="mutagenesis site" description="Correct sorting to the plasma membrane but no endocytosis and internalization." evidence="7">
    <original>G</original>
    <variation>A</variation>
    <location>
        <position position="413"/>
    </location>
</feature>
<feature type="mutagenesis site" description="Correct sorting to the plasma membrane but no endocytosis and internalization." evidence="7">
    <original>L</original>
    <variation>A</variation>
    <location>
        <position position="415"/>
    </location>
</feature>
<dbReference type="EC" id="3.2.1.18"/>
<dbReference type="EMBL" id="AF040958">
    <property type="protein sequence ID" value="AAB96774.1"/>
    <property type="molecule type" value="mRNA"/>
</dbReference>
<dbReference type="EMBL" id="X78687">
    <property type="protein sequence ID" value="CAA55356.1"/>
    <property type="molecule type" value="mRNA"/>
</dbReference>
<dbReference type="EMBL" id="U84246">
    <property type="protein sequence ID" value="AAD09239.1"/>
    <property type="molecule type" value="mRNA"/>
</dbReference>
<dbReference type="EMBL" id="AF134726">
    <property type="protein sequence ID" value="AAD21814.1"/>
    <property type="molecule type" value="Genomic_DNA"/>
</dbReference>
<dbReference type="EMBL" id="BA000025">
    <property type="protein sequence ID" value="BAB63297.1"/>
    <property type="molecule type" value="Genomic_DNA"/>
</dbReference>
<dbReference type="EMBL" id="BT007206">
    <property type="protein sequence ID" value="AAP35870.1"/>
    <property type="molecule type" value="mRNA"/>
</dbReference>
<dbReference type="EMBL" id="BC000722">
    <property type="protein sequence ID" value="AAH00722.1"/>
    <property type="molecule type" value="mRNA"/>
</dbReference>
<dbReference type="EMBL" id="BC011900">
    <property type="protein sequence ID" value="AAH11900.1"/>
    <property type="molecule type" value="mRNA"/>
</dbReference>
<dbReference type="CCDS" id="CCDS4723.1"/>
<dbReference type="RefSeq" id="NP_000425.1">
    <property type="nucleotide sequence ID" value="NM_000434.4"/>
</dbReference>
<dbReference type="SMR" id="Q99519"/>
<dbReference type="BioGRID" id="110831">
    <property type="interactions" value="112"/>
</dbReference>
<dbReference type="CORUM" id="Q99519"/>
<dbReference type="FunCoup" id="Q99519">
    <property type="interactions" value="265"/>
</dbReference>
<dbReference type="IntAct" id="Q99519">
    <property type="interactions" value="46"/>
</dbReference>
<dbReference type="MINT" id="Q99519"/>
<dbReference type="STRING" id="9606.ENSP00000364782"/>
<dbReference type="BindingDB" id="Q99519"/>
<dbReference type="ChEMBL" id="CHEMBL2726"/>
<dbReference type="DrugBank" id="DB00945">
    <property type="generic name" value="Acetylsalicylic acid"/>
</dbReference>
<dbReference type="DrugBank" id="DB00482">
    <property type="generic name" value="Celecoxib"/>
</dbReference>
<dbReference type="DrugBank" id="DB00198">
    <property type="generic name" value="Oseltamivir"/>
</dbReference>
<dbReference type="GuidetoPHARMACOLOGY" id="3214"/>
<dbReference type="CAZy" id="GH33">
    <property type="family name" value="Glycoside Hydrolase Family 33"/>
</dbReference>
<dbReference type="GlyConnect" id="1743">
    <property type="glycosylation" value="2 N-Linked glycans (1 site)"/>
</dbReference>
<dbReference type="GlyCosmos" id="Q99519">
    <property type="glycosylation" value="3 sites, 1 glycan"/>
</dbReference>
<dbReference type="GlyGen" id="Q99519">
    <property type="glycosylation" value="7 sites, 31 N-linked glycans (2 sites), 1 O-linked glycan (1 site)"/>
</dbReference>
<dbReference type="iPTMnet" id="Q99519"/>
<dbReference type="PhosphoSitePlus" id="Q99519"/>
<dbReference type="SwissPalm" id="Q99519"/>
<dbReference type="BioMuta" id="NEU1"/>
<dbReference type="DMDM" id="17368612"/>
<dbReference type="jPOST" id="Q99519"/>
<dbReference type="MassIVE" id="Q99519"/>
<dbReference type="PaxDb" id="9606-ENSP00000364782"/>
<dbReference type="PeptideAtlas" id="Q99519"/>
<dbReference type="ProteomicsDB" id="78308"/>
<dbReference type="Pumba" id="Q99519"/>
<dbReference type="Antibodypedia" id="51599">
    <property type="antibodies" value="395 antibodies from 28 providers"/>
</dbReference>
<dbReference type="DNASU" id="4758"/>
<dbReference type="Ensembl" id="ENST00000229725.4">
    <property type="protein sequence ID" value="ENSP00000229725.4"/>
    <property type="gene ID" value="ENSG00000184494.8"/>
</dbReference>
<dbReference type="Ensembl" id="ENST00000375631.5">
    <property type="protein sequence ID" value="ENSP00000364782.4"/>
    <property type="gene ID" value="ENSG00000204386.13"/>
</dbReference>
<dbReference type="Ensembl" id="ENST00000411774.3">
    <property type="protein sequence ID" value="ENSP00000399309.3"/>
    <property type="gene ID" value="ENSG00000234846.7"/>
</dbReference>
<dbReference type="Ensembl" id="ENST00000422978.2">
    <property type="protein sequence ID" value="ENSP00000408957.2"/>
    <property type="gene ID" value="ENSG00000227129.6"/>
</dbReference>
<dbReference type="Ensembl" id="ENST00000423382.2">
    <property type="protein sequence ID" value="ENSP00000401067.2"/>
    <property type="gene ID" value="ENSG00000228691.6"/>
</dbReference>
<dbReference type="Ensembl" id="ENST00000434496.2">
    <property type="protein sequence ID" value="ENSP00000409489.2"/>
    <property type="gene ID" value="ENSG00000234343.6"/>
</dbReference>
<dbReference type="Ensembl" id="ENST00000437432.2">
    <property type="protein sequence ID" value="ENSP00000403720.2"/>
    <property type="gene ID" value="ENSG00000223957.6"/>
</dbReference>
<dbReference type="Ensembl" id="ENST00000439648.2">
    <property type="protein sequence ID" value="ENSP00000408207.2"/>
    <property type="gene ID" value="ENSG00000227315.7"/>
</dbReference>
<dbReference type="GeneID" id="4758"/>
<dbReference type="KEGG" id="hsa:4758"/>
<dbReference type="MANE-Select" id="ENST00000375631.5">
    <property type="protein sequence ID" value="ENSP00000364782.4"/>
    <property type="RefSeq nucleotide sequence ID" value="NM_000434.4"/>
    <property type="RefSeq protein sequence ID" value="NP_000425.1"/>
</dbReference>
<dbReference type="UCSC" id="uc003nxq.5">
    <property type="organism name" value="human"/>
</dbReference>
<dbReference type="AGR" id="HGNC:7758"/>
<dbReference type="CTD" id="4758"/>
<dbReference type="DisGeNET" id="4758"/>
<dbReference type="GeneCards" id="NEU1"/>
<dbReference type="HGNC" id="HGNC:7758">
    <property type="gene designation" value="NEU1"/>
</dbReference>
<dbReference type="HPA" id="ENSG00000204386">
    <property type="expression patterns" value="Low tissue specificity"/>
</dbReference>
<dbReference type="MalaCards" id="NEU1"/>
<dbReference type="MIM" id="256550">
    <property type="type" value="phenotype"/>
</dbReference>
<dbReference type="MIM" id="608272">
    <property type="type" value="gene"/>
</dbReference>
<dbReference type="neXtProt" id="NX_Q99519"/>
<dbReference type="OpenTargets" id="ENSG00000204386"/>
<dbReference type="Orphanet" id="93400">
    <property type="disease" value="Congenital sialidosis type 2"/>
</dbReference>
<dbReference type="Orphanet" id="93399">
    <property type="disease" value="Juvenile sialidosis type 2"/>
</dbReference>
<dbReference type="Orphanet" id="812">
    <property type="disease" value="Sialidosis type 1"/>
</dbReference>
<dbReference type="PharmGKB" id="PA31560"/>
<dbReference type="VEuPathDB" id="HostDB:ENSG00000204386"/>
<dbReference type="eggNOG" id="ENOG502QSIT">
    <property type="taxonomic scope" value="Eukaryota"/>
</dbReference>
<dbReference type="GeneTree" id="ENSGT00950000182944"/>
<dbReference type="HOGENOM" id="CLU_024620_3_0_1"/>
<dbReference type="InParanoid" id="Q99519"/>
<dbReference type="OMA" id="IRSYDAC"/>
<dbReference type="OrthoDB" id="2739686at2759"/>
<dbReference type="PAN-GO" id="Q99519">
    <property type="GO annotations" value="6 GO annotations based on evolutionary models"/>
</dbReference>
<dbReference type="PhylomeDB" id="Q99519"/>
<dbReference type="TreeFam" id="TF331063"/>
<dbReference type="BRENDA" id="3.2.1.18">
    <property type="organism ID" value="2681"/>
</dbReference>
<dbReference type="PathwayCommons" id="Q99519"/>
<dbReference type="Reactome" id="R-HSA-4085001">
    <property type="pathway name" value="Sialic acid metabolism"/>
</dbReference>
<dbReference type="Reactome" id="R-HSA-4341670">
    <property type="pathway name" value="Defective NEU1 causes sialidosis"/>
</dbReference>
<dbReference type="Reactome" id="R-HSA-6798695">
    <property type="pathway name" value="Neutrophil degranulation"/>
</dbReference>
<dbReference type="Reactome" id="R-HSA-9840310">
    <property type="pathway name" value="Glycosphingolipid catabolism"/>
</dbReference>
<dbReference type="SABIO-RK" id="Q99519"/>
<dbReference type="SignaLink" id="Q99519"/>
<dbReference type="SIGNOR" id="Q99519"/>
<dbReference type="BioGRID-ORCS" id="4758">
    <property type="hits" value="14 hits in 1166 CRISPR screens"/>
</dbReference>
<dbReference type="ChiTaRS" id="NEU1">
    <property type="organism name" value="human"/>
</dbReference>
<dbReference type="GeneWiki" id="NEU1"/>
<dbReference type="GenomeRNAi" id="4758"/>
<dbReference type="Pharos" id="Q99519">
    <property type="development level" value="Tchem"/>
</dbReference>
<dbReference type="PRO" id="PR:Q99519"/>
<dbReference type="Proteomes" id="UP000005640">
    <property type="component" value="Chromosome 6"/>
</dbReference>
<dbReference type="RNAct" id="Q99519">
    <property type="molecule type" value="protein"/>
</dbReference>
<dbReference type="Bgee" id="ENSG00000184494">
    <property type="expression patterns" value="Expressed in placenta and 4 other cell types or tissues"/>
</dbReference>
<dbReference type="ExpressionAtlas" id="Q99519">
    <property type="expression patterns" value="baseline and differential"/>
</dbReference>
<dbReference type="GO" id="GO:0030054">
    <property type="term" value="C:cell junction"/>
    <property type="evidence" value="ECO:0000314"/>
    <property type="project" value="HPA"/>
</dbReference>
<dbReference type="GO" id="GO:0005737">
    <property type="term" value="C:cytoplasm"/>
    <property type="evidence" value="ECO:0000318"/>
    <property type="project" value="GO_Central"/>
</dbReference>
<dbReference type="GO" id="GO:0070062">
    <property type="term" value="C:extracellular exosome"/>
    <property type="evidence" value="ECO:0007005"/>
    <property type="project" value="UniProtKB"/>
</dbReference>
<dbReference type="GO" id="GO:0005576">
    <property type="term" value="C:extracellular region"/>
    <property type="evidence" value="ECO:0000304"/>
    <property type="project" value="Reactome"/>
</dbReference>
<dbReference type="GO" id="GO:0043231">
    <property type="term" value="C:intracellular membrane-bounded organelle"/>
    <property type="evidence" value="ECO:0000314"/>
    <property type="project" value="HPA"/>
</dbReference>
<dbReference type="GO" id="GO:0043202">
    <property type="term" value="C:lysosomal lumen"/>
    <property type="evidence" value="ECO:0000304"/>
    <property type="project" value="Reactome"/>
</dbReference>
<dbReference type="GO" id="GO:0005765">
    <property type="term" value="C:lysosomal membrane"/>
    <property type="evidence" value="ECO:0007669"/>
    <property type="project" value="UniProtKB-SubCell"/>
</dbReference>
<dbReference type="GO" id="GO:0005764">
    <property type="term" value="C:lysosome"/>
    <property type="evidence" value="ECO:0000314"/>
    <property type="project" value="UniProtKB"/>
</dbReference>
<dbReference type="GO" id="GO:0016020">
    <property type="term" value="C:membrane"/>
    <property type="evidence" value="ECO:0000318"/>
    <property type="project" value="GO_Central"/>
</dbReference>
<dbReference type="GO" id="GO:0005886">
    <property type="term" value="C:plasma membrane"/>
    <property type="evidence" value="ECO:0007669"/>
    <property type="project" value="UniProtKB-SubCell"/>
</dbReference>
<dbReference type="GO" id="GO:0035580">
    <property type="term" value="C:specific granule lumen"/>
    <property type="evidence" value="ECO:0000304"/>
    <property type="project" value="Reactome"/>
</dbReference>
<dbReference type="GO" id="GO:0016997">
    <property type="term" value="F:alpha-sialidase activity"/>
    <property type="evidence" value="ECO:0000315"/>
    <property type="project" value="UniProtKB"/>
</dbReference>
<dbReference type="GO" id="GO:0004308">
    <property type="term" value="F:exo-alpha-sialidase activity"/>
    <property type="evidence" value="ECO:0000314"/>
    <property type="project" value="UniProtKB"/>
</dbReference>
<dbReference type="GO" id="GO:0006689">
    <property type="term" value="P:ganglioside catabolic process"/>
    <property type="evidence" value="ECO:0000318"/>
    <property type="project" value="GO_Central"/>
</dbReference>
<dbReference type="GO" id="GO:0009313">
    <property type="term" value="P:oligosaccharide catabolic process"/>
    <property type="evidence" value="ECO:0000315"/>
    <property type="project" value="UniProtKB"/>
</dbReference>
<dbReference type="CDD" id="cd15482">
    <property type="entry name" value="Sialidase_non-viral"/>
    <property type="match status" value="1"/>
</dbReference>
<dbReference type="FunFam" id="2.120.10.10:FF:000003">
    <property type="entry name" value="Neuraminidase 1"/>
    <property type="match status" value="1"/>
</dbReference>
<dbReference type="Gene3D" id="2.120.10.10">
    <property type="match status" value="1"/>
</dbReference>
<dbReference type="InterPro" id="IPR011040">
    <property type="entry name" value="Sialidase"/>
</dbReference>
<dbReference type="InterPro" id="IPR026856">
    <property type="entry name" value="Sialidase_fam"/>
</dbReference>
<dbReference type="InterPro" id="IPR036278">
    <property type="entry name" value="Sialidase_sf"/>
</dbReference>
<dbReference type="PANTHER" id="PTHR10628">
    <property type="entry name" value="SIALIDASE"/>
    <property type="match status" value="1"/>
</dbReference>
<dbReference type="PANTHER" id="PTHR10628:SF25">
    <property type="entry name" value="SIALIDASE-1"/>
    <property type="match status" value="1"/>
</dbReference>
<dbReference type="Pfam" id="PF13088">
    <property type="entry name" value="BNR_2"/>
    <property type="match status" value="1"/>
</dbReference>
<dbReference type="SUPFAM" id="SSF50939">
    <property type="entry name" value="Sialidases"/>
    <property type="match status" value="1"/>
</dbReference>
<sequence length="415" mass="45467">MTGERPSTALPDRRWGPRILGFWGGCRVWVFAAIFLLLSLAASWSKAENDFGLVQPLVTMEQLLWVSGRQIGSVDTFRIPLITATPRGTLLAFAEARKMSSSDEGAKFIALRRSMDQGSTWSPTAFIVNDGDVPDGLNLGAVVSDVETGVVFLFYSLCAHKAGCQVASTMLVWSKDDGVSWSTPRNLSLDIGTEVFAPGPGSGIQKQREPRKGRLIVCGHGTLERDGVFCLLSDDHGASWRYGSGVSGIPYGQPKQENDFNPDECQPYELPDGSVVINARNQNNYHCHCRIVLRSYDACDTLRPRDVTFDPELVDPVVAAGAVVTSSGIVFFSNPAHPEFRVNLTLRWSFSNGTSWRKETVQLWPGPSGYSSLATLEGSMDGEEQAPQLYVLYEKGRNHYTESISVAKISVYGTL</sequence>
<comment type="function">
    <text evidence="11 13">Catalyzes the removal of sialic acid (N-acetylneuraminic acid) moieties from glycoproteins and glycolipids. To be active, it is strictly dependent on its presence in the multienzyme complex. Appears to have a preference for alpha 2-3 and alpha 2-6 sialyl linkage.</text>
</comment>
<comment type="catalytic activity">
    <reaction evidence="9 13 14">
        <text>Hydrolysis of alpha-(2-&gt;3)-, alpha-(2-&gt;6)-, alpha-(2-&gt;8)- glycosidic linkages of terminal sialic acid residues in oligosaccharides, glycoproteins, glycolipids, colominic acid and synthetic substrates.</text>
        <dbReference type="EC" id="3.2.1.18"/>
    </reaction>
</comment>
<comment type="biophysicochemical properties">
    <phDependence>
        <text>Optimum pH is 4.6.</text>
    </phDependence>
</comment>
<comment type="subunit">
    <text>Interacts with cathepsin A (protective protein), beta-galactosidase and N-acetylgalactosamine-6-sulfate sulfatase in a multienzyme complex.</text>
</comment>
<comment type="interaction">
    <interactant intactId="EBI-721517">
        <id>Q99519</id>
    </interactant>
    <interactant intactId="EBI-13059134">
        <id>Q13520</id>
        <label>AQP6</label>
    </interactant>
    <organismsDiffer>false</organismsDiffer>
    <experiments>3</experiments>
</comment>
<comment type="interaction">
    <interactant intactId="EBI-721517">
        <id>Q99519</id>
    </interactant>
    <interactant intactId="EBI-7797864">
        <id>P11912</id>
        <label>CD79A</label>
    </interactant>
    <organismsDiffer>false</organismsDiffer>
    <experiments>3</experiments>
</comment>
<comment type="interaction">
    <interactant intactId="EBI-721517">
        <id>Q99519</id>
    </interactant>
    <interactant intactId="EBI-18202821">
        <id>Q8IU89</id>
        <label>CERS3</label>
    </interactant>
    <organismsDiffer>false</organismsDiffer>
    <experiments>3</experiments>
</comment>
<comment type="interaction">
    <interactant intactId="EBI-721517">
        <id>Q99519</id>
    </interactant>
    <interactant intactId="EBI-2622997">
        <id>Q9HA82</id>
        <label>CERS4</label>
    </interactant>
    <organismsDiffer>false</organismsDiffer>
    <experiments>3</experiments>
</comment>
<comment type="interaction">
    <interactant intactId="EBI-721517">
        <id>Q99519</id>
    </interactant>
    <interactant intactId="EBI-625022">
        <id>O43889-2</id>
        <label>CREB3</label>
    </interactant>
    <organismsDiffer>false</organismsDiffer>
    <experiments>3</experiments>
</comment>
<comment type="interaction">
    <interactant intactId="EBI-721517">
        <id>Q99519</id>
    </interactant>
    <interactant intactId="EBI-6942903">
        <id>Q96BA8</id>
        <label>CREB3L1</label>
    </interactant>
    <organismsDiffer>false</organismsDiffer>
    <experiments>5</experiments>
</comment>
<comment type="interaction">
    <interactant intactId="EBI-721517">
        <id>Q99519</id>
    </interactant>
    <interactant intactId="EBI-3915253">
        <id>Q15125</id>
        <label>EBP</label>
    </interactant>
    <organismsDiffer>false</organismsDiffer>
    <experiments>3</experiments>
</comment>
<comment type="interaction">
    <interactant intactId="EBI-721517">
        <id>Q99519</id>
    </interactant>
    <interactant intactId="EBI-781551">
        <id>Q9Y282</id>
        <label>ERGIC3</label>
    </interactant>
    <organismsDiffer>false</organismsDiffer>
    <experiments>3</experiments>
</comment>
<comment type="interaction">
    <interactant intactId="EBI-721517">
        <id>Q99519</id>
    </interactant>
    <interactant intactId="EBI-712073">
        <id>Q8NBJ4</id>
        <label>GOLM1</label>
    </interactant>
    <organismsDiffer>false</organismsDiffer>
    <experiments>3</experiments>
</comment>
<comment type="interaction">
    <interactant intactId="EBI-721517">
        <id>Q99519</id>
    </interactant>
    <interactant intactId="EBI-13345167">
        <id>Q8TDT2</id>
        <label>GPR152</label>
    </interactant>
    <organismsDiffer>false</organismsDiffer>
    <experiments>3</experiments>
</comment>
<comment type="interaction">
    <interactant intactId="EBI-721517">
        <id>Q99519</id>
    </interactant>
    <interactant intactId="EBI-11721746">
        <id>Q8TED1</id>
        <label>GPX8</label>
    </interactant>
    <organismsDiffer>false</organismsDiffer>
    <experiments>3</experiments>
</comment>
<comment type="interaction">
    <interactant intactId="EBI-721517">
        <id>Q99519</id>
    </interactant>
    <interactant intactId="EBI-1052304">
        <id>Q8NBQ5</id>
        <label>HSD17B11</label>
    </interactant>
    <organismsDiffer>false</organismsDiffer>
    <experiments>3</experiments>
</comment>
<comment type="interaction">
    <interactant intactId="EBI-721517">
        <id>Q99519</id>
    </interactant>
    <interactant intactId="EBI-724754">
        <id>O14880</id>
        <label>MGST3</label>
    </interactant>
    <organismsDiffer>false</organismsDiffer>
    <experiments>3</experiments>
</comment>
<comment type="interaction">
    <interactant intactId="EBI-721517">
        <id>Q99519</id>
    </interactant>
    <interactant intactId="EBI-17263240">
        <id>P15941-11</id>
        <label>MUC1</label>
    </interactant>
    <organismsDiffer>false</organismsDiffer>
    <experiments>3</experiments>
</comment>
<comment type="interaction">
    <interactant intactId="EBI-721517">
        <id>Q99519</id>
    </interactant>
    <interactant intactId="EBI-3923031">
        <id>Q14973</id>
        <label>SLC10A1</label>
    </interactant>
    <organismsDiffer>false</organismsDiffer>
    <experiments>3</experiments>
</comment>
<comment type="interaction">
    <interactant intactId="EBI-721517">
        <id>Q99519</id>
    </interactant>
    <interactant intactId="EBI-18159983">
        <id>Q3KNW5</id>
        <label>SLC10A6</label>
    </interactant>
    <organismsDiffer>false</organismsDiffer>
    <experiments>3</experiments>
</comment>
<comment type="interaction">
    <interactant intactId="EBI-721517">
        <id>Q99519</id>
    </interactant>
    <interactant intactId="EBI-17595455">
        <id>P54219-3</id>
        <label>SLC18A1</label>
    </interactant>
    <organismsDiffer>false</organismsDiffer>
    <experiments>3</experiments>
</comment>
<comment type="interaction">
    <interactant intactId="EBI-721517">
        <id>Q99519</id>
    </interactant>
    <interactant intactId="EBI-2823239">
        <id>Q9NUM3</id>
        <label>SLC39A9</label>
    </interactant>
    <organismsDiffer>false</organismsDiffer>
    <experiments>3</experiments>
</comment>
<comment type="interaction">
    <interactant intactId="EBI-721517">
        <id>Q99519</id>
    </interactant>
    <interactant intactId="EBI-8638294">
        <id>Q9NUH8</id>
        <label>TMEM14B</label>
    </interactant>
    <organismsDiffer>false</organismsDiffer>
    <experiments>3</experiments>
</comment>
<comment type="subcellular location">
    <subcellularLocation>
        <location>Lysosome membrane</location>
        <topology>Peripheral membrane protein</topology>
        <orientation>Lumenal side</orientation>
    </subcellularLocation>
    <subcellularLocation>
        <location>Lysosome lumen</location>
    </subcellularLocation>
    <subcellularLocation>
        <location>Cell membrane</location>
    </subcellularLocation>
    <subcellularLocation>
        <location>Cytoplasmic vesicle</location>
    </subcellularLocation>
    <subcellularLocation>
        <location evidence="11">Lysosome</location>
    </subcellularLocation>
    <text>Localized not only on the inner side of the lysosomal membrane and in the lysosomal lumen, but also on the plasma membrane and in intracellular vesicles.</text>
</comment>
<comment type="tissue specificity">
    <text evidence="13 14">Highly expressed in pancreas, followed by skeletal muscle, kidney, placenta, heart, lung and liver. Weakly expressed in brain.</text>
</comment>
<comment type="domain">
    <text>A C-terminal internalization signal (YGTL) appears to allow the targeting of plasma membrane proteins to endosomes.</text>
</comment>
<comment type="PTM">
    <text evidence="10 13 15">N-glycosylated.</text>
</comment>
<comment type="PTM">
    <text>Phosphorylation of tyrosine within the internalization signal results in inhibition of sialidase internalization and blockage on the plasma membrane.</text>
</comment>
<comment type="disease" evidence="3 4 5 6 8 9 11 12 13 14">
    <disease id="DI-02304">
        <name>Sialidosis</name>
        <acronym>SIALIDOSIS</acronym>
        <description>Lysosomal storage disease occurring as two types with various manifestations. Type 1 sialidosis (cherry red spot-myoclonus syndrome or normosomatic type) is late-onset and it is characterized by the formation of cherry red macular spots in childhood, progressive debilitating myoclonus, insiduous visual loss and rarely ataxia. The diagnosis can be confirmed by the screening of the urine for sialyloligosaccharides. Type 2 sialidosis (also known as dysmorphic type) occurs as several variants of increasing severity with earlier age of onset. It is characterized by the presence of abnormal somatic features including coarse facies and dysostosis multiplex, vertebral deformities, intellectual disability, cherry-red spot/myoclonus, sialuria, cytoplasmic vacuolation of peripheral lymphocytes, bone marrow cells and conjunctival epithelial cells.</description>
        <dbReference type="MIM" id="256550"/>
    </disease>
    <text>The disease is caused by variants affecting the gene represented in this entry.</text>
</comment>
<comment type="similarity">
    <text evidence="16">Belongs to the glycosyl hydrolase 33 family.</text>
</comment>
<comment type="online information" name="Wikipedia">
    <link uri="https://en.wikipedia.org/wiki/Neuraminidase"/>
    <text>Neuraminidase entry</text>
</comment>
<proteinExistence type="evidence at protein level"/>